<comment type="function">
    <text>Auxillary subunit of the N-terminal acetyltransferase A (NatA) complex which displays alpha (N-terminal) acetyltransferase activity.</text>
</comment>
<comment type="subunit">
    <text>Component of the N-terminal acetyltransferase A (NatA) complex composed of NAA10 and NAA16.</text>
</comment>
<comment type="interaction">
    <interactant intactId="EBI-2561139">
        <id>Q6N069</id>
    </interactant>
    <interactant intactId="EBI-747693">
        <id>P41227</id>
        <label>NAA10</label>
    </interactant>
    <organismsDiffer>false</organismsDiffer>
    <experiments>5</experiments>
</comment>
<comment type="interaction">
    <interactant intactId="EBI-2561139">
        <id>Q6N069</id>
    </interactant>
    <interactant intactId="EBI-2585120">
        <id>Q9BSU3</id>
        <label>NAA11</label>
    </interactant>
    <organismsDiffer>false</organismsDiffer>
    <experiments>2</experiments>
</comment>
<comment type="interaction">
    <interactant intactId="EBI-2561139">
        <id>Q6N069</id>
    </interactant>
    <interactant intactId="EBI-1052523">
        <id>Q9GZZ1</id>
        <label>NAA50</label>
    </interactant>
    <organismsDiffer>false</organismsDiffer>
    <experiments>2</experiments>
</comment>
<comment type="interaction">
    <interactant intactId="EBI-10699337">
        <id>Q6N069-4</id>
    </interactant>
    <interactant intactId="EBI-744302">
        <id>P14136</id>
        <label>GFAP</label>
    </interactant>
    <organismsDiffer>false</organismsDiffer>
    <experiments>3</experiments>
</comment>
<comment type="interaction">
    <interactant intactId="EBI-10699337">
        <id>Q6N069-4</id>
    </interactant>
    <interactant intactId="EBI-50433196">
        <id>A0A6Q8PF08</id>
        <label>PMP22</label>
    </interactant>
    <organismsDiffer>false</organismsDiffer>
    <experiments>3</experiments>
</comment>
<comment type="alternative products">
    <event type="alternative splicing"/>
    <isoform>
        <id>Q6N069-1</id>
        <name>1</name>
        <sequence type="displayed"/>
    </isoform>
    <isoform>
        <id>Q6N069-2</id>
        <name>2</name>
        <name>Long</name>
        <sequence type="described" ref="VSP_012568 VSP_012569"/>
    </isoform>
    <isoform>
        <id>Q6N069-3</id>
        <name>3</name>
        <sequence type="described" ref="VSP_012566 VSP_012567"/>
    </isoform>
    <isoform>
        <id>Q6N069-4</id>
        <name>4</name>
        <name>Short</name>
        <sequence type="described" ref="VSP_012564 VSP_012565"/>
    </isoform>
    <isoform>
        <id>Q6N069-5</id>
        <name>5</name>
        <sequence type="described" ref="VSP_012562 VSP_012563"/>
    </isoform>
</comment>
<reference key="1">
    <citation type="journal article" date="2004" name="Nature">
        <title>The DNA sequence and analysis of human chromosome 13.</title>
        <authorList>
            <person name="Dunham A."/>
            <person name="Matthews L.H."/>
            <person name="Burton J."/>
            <person name="Ashurst J.L."/>
            <person name="Howe K.L."/>
            <person name="Ashcroft K.J."/>
            <person name="Beare D.M."/>
            <person name="Burford D.C."/>
            <person name="Hunt S.E."/>
            <person name="Griffiths-Jones S."/>
            <person name="Jones M.C."/>
            <person name="Keenan S.J."/>
            <person name="Oliver K."/>
            <person name="Scott C.E."/>
            <person name="Ainscough R."/>
            <person name="Almeida J.P."/>
            <person name="Ambrose K.D."/>
            <person name="Andrews D.T."/>
            <person name="Ashwell R.I.S."/>
            <person name="Babbage A.K."/>
            <person name="Bagguley C.L."/>
            <person name="Bailey J."/>
            <person name="Bannerjee R."/>
            <person name="Barlow K.F."/>
            <person name="Bates K."/>
            <person name="Beasley H."/>
            <person name="Bird C.P."/>
            <person name="Bray-Allen S."/>
            <person name="Brown A.J."/>
            <person name="Brown J.Y."/>
            <person name="Burrill W."/>
            <person name="Carder C."/>
            <person name="Carter N.P."/>
            <person name="Chapman J.C."/>
            <person name="Clamp M.E."/>
            <person name="Clark S.Y."/>
            <person name="Clarke G."/>
            <person name="Clee C.M."/>
            <person name="Clegg S.C."/>
            <person name="Cobley V."/>
            <person name="Collins J.E."/>
            <person name="Corby N."/>
            <person name="Coville G.J."/>
            <person name="Deloukas P."/>
            <person name="Dhami P."/>
            <person name="Dunham I."/>
            <person name="Dunn M."/>
            <person name="Earthrowl M.E."/>
            <person name="Ellington A.G."/>
            <person name="Faulkner L."/>
            <person name="Frankish A.G."/>
            <person name="Frankland J."/>
            <person name="French L."/>
            <person name="Garner P."/>
            <person name="Garnett J."/>
            <person name="Gilbert J.G.R."/>
            <person name="Gilson C.J."/>
            <person name="Ghori J."/>
            <person name="Grafham D.V."/>
            <person name="Gribble S.M."/>
            <person name="Griffiths C."/>
            <person name="Hall R.E."/>
            <person name="Hammond S."/>
            <person name="Harley J.L."/>
            <person name="Hart E.A."/>
            <person name="Heath P.D."/>
            <person name="Howden P.J."/>
            <person name="Huckle E.J."/>
            <person name="Hunt P.J."/>
            <person name="Hunt A.R."/>
            <person name="Johnson C."/>
            <person name="Johnson D."/>
            <person name="Kay M."/>
            <person name="Kimberley A.M."/>
            <person name="King A."/>
            <person name="Laird G.K."/>
            <person name="Langford C.J."/>
            <person name="Lawlor S."/>
            <person name="Leongamornlert D.A."/>
            <person name="Lloyd D.M."/>
            <person name="Lloyd C."/>
            <person name="Loveland J.E."/>
            <person name="Lovell J."/>
            <person name="Martin S."/>
            <person name="Mashreghi-Mohammadi M."/>
            <person name="McLaren S.J."/>
            <person name="McMurray A."/>
            <person name="Milne S."/>
            <person name="Moore M.J.F."/>
            <person name="Nickerson T."/>
            <person name="Palmer S.A."/>
            <person name="Pearce A.V."/>
            <person name="Peck A.I."/>
            <person name="Pelan S."/>
            <person name="Phillimore B."/>
            <person name="Porter K.M."/>
            <person name="Rice C.M."/>
            <person name="Searle S."/>
            <person name="Sehra H.K."/>
            <person name="Shownkeen R."/>
            <person name="Skuce C.D."/>
            <person name="Smith M."/>
            <person name="Steward C.A."/>
            <person name="Sycamore N."/>
            <person name="Tester J."/>
            <person name="Thomas D.W."/>
            <person name="Tracey A."/>
            <person name="Tromans A."/>
            <person name="Tubby B."/>
            <person name="Wall M."/>
            <person name="Wallis J.M."/>
            <person name="West A.P."/>
            <person name="Whitehead S.L."/>
            <person name="Willey D.L."/>
            <person name="Wilming L."/>
            <person name="Wray P.W."/>
            <person name="Wright M.W."/>
            <person name="Young L."/>
            <person name="Coulson A."/>
            <person name="Durbin R.M."/>
            <person name="Hubbard T."/>
            <person name="Sulston J.E."/>
            <person name="Beck S."/>
            <person name="Bentley D.R."/>
            <person name="Rogers J."/>
            <person name="Ross M.T."/>
        </authorList>
    </citation>
    <scope>NUCLEOTIDE SEQUENCE [LARGE SCALE GENOMIC DNA]</scope>
</reference>
<reference key="2">
    <citation type="submission" date="2005-07" db="EMBL/GenBank/DDBJ databases">
        <authorList>
            <person name="Mural R.J."/>
            <person name="Istrail S."/>
            <person name="Sutton G.G."/>
            <person name="Florea L."/>
            <person name="Halpern A.L."/>
            <person name="Mobarry C.M."/>
            <person name="Lippert R."/>
            <person name="Walenz B."/>
            <person name="Shatkay H."/>
            <person name="Dew I."/>
            <person name="Miller J.R."/>
            <person name="Flanigan M.J."/>
            <person name="Edwards N.J."/>
            <person name="Bolanos R."/>
            <person name="Fasulo D."/>
            <person name="Halldorsson B.V."/>
            <person name="Hannenhalli S."/>
            <person name="Turner R."/>
            <person name="Yooseph S."/>
            <person name="Lu F."/>
            <person name="Nusskern D.R."/>
            <person name="Shue B.C."/>
            <person name="Zheng X.H."/>
            <person name="Zhong F."/>
            <person name="Delcher A.L."/>
            <person name="Huson D.H."/>
            <person name="Kravitz S.A."/>
            <person name="Mouchard L."/>
            <person name="Reinert K."/>
            <person name="Remington K.A."/>
            <person name="Clark A.G."/>
            <person name="Waterman M.S."/>
            <person name="Eichler E.E."/>
            <person name="Adams M.D."/>
            <person name="Hunkapiller M.W."/>
            <person name="Myers E.W."/>
            <person name="Venter J.C."/>
        </authorList>
    </citation>
    <scope>NUCLEOTIDE SEQUENCE [LARGE SCALE GENOMIC DNA]</scope>
</reference>
<reference key="3">
    <citation type="journal article" date="2004" name="Nat. Genet.">
        <title>Complete sequencing and characterization of 21,243 full-length human cDNAs.</title>
        <authorList>
            <person name="Ota T."/>
            <person name="Suzuki Y."/>
            <person name="Nishikawa T."/>
            <person name="Otsuki T."/>
            <person name="Sugiyama T."/>
            <person name="Irie R."/>
            <person name="Wakamatsu A."/>
            <person name="Hayashi K."/>
            <person name="Sato H."/>
            <person name="Nagai K."/>
            <person name="Kimura K."/>
            <person name="Makita H."/>
            <person name="Sekine M."/>
            <person name="Obayashi M."/>
            <person name="Nishi T."/>
            <person name="Shibahara T."/>
            <person name="Tanaka T."/>
            <person name="Ishii S."/>
            <person name="Yamamoto J."/>
            <person name="Saito K."/>
            <person name="Kawai Y."/>
            <person name="Isono Y."/>
            <person name="Nakamura Y."/>
            <person name="Nagahari K."/>
            <person name="Murakami K."/>
            <person name="Yasuda T."/>
            <person name="Iwayanagi T."/>
            <person name="Wagatsuma M."/>
            <person name="Shiratori A."/>
            <person name="Sudo H."/>
            <person name="Hosoiri T."/>
            <person name="Kaku Y."/>
            <person name="Kodaira H."/>
            <person name="Kondo H."/>
            <person name="Sugawara M."/>
            <person name="Takahashi M."/>
            <person name="Kanda K."/>
            <person name="Yokoi T."/>
            <person name="Furuya T."/>
            <person name="Kikkawa E."/>
            <person name="Omura Y."/>
            <person name="Abe K."/>
            <person name="Kamihara K."/>
            <person name="Katsuta N."/>
            <person name="Sato K."/>
            <person name="Tanikawa M."/>
            <person name="Yamazaki M."/>
            <person name="Ninomiya K."/>
            <person name="Ishibashi T."/>
            <person name="Yamashita H."/>
            <person name="Murakawa K."/>
            <person name="Fujimori K."/>
            <person name="Tanai H."/>
            <person name="Kimata M."/>
            <person name="Watanabe M."/>
            <person name="Hiraoka S."/>
            <person name="Chiba Y."/>
            <person name="Ishida S."/>
            <person name="Ono Y."/>
            <person name="Takiguchi S."/>
            <person name="Watanabe S."/>
            <person name="Yosida M."/>
            <person name="Hotuta T."/>
            <person name="Kusano J."/>
            <person name="Kanehori K."/>
            <person name="Takahashi-Fujii A."/>
            <person name="Hara H."/>
            <person name="Tanase T.-O."/>
            <person name="Nomura Y."/>
            <person name="Togiya S."/>
            <person name="Komai F."/>
            <person name="Hara R."/>
            <person name="Takeuchi K."/>
            <person name="Arita M."/>
            <person name="Imose N."/>
            <person name="Musashino K."/>
            <person name="Yuuki H."/>
            <person name="Oshima A."/>
            <person name="Sasaki N."/>
            <person name="Aotsuka S."/>
            <person name="Yoshikawa Y."/>
            <person name="Matsunawa H."/>
            <person name="Ichihara T."/>
            <person name="Shiohata N."/>
            <person name="Sano S."/>
            <person name="Moriya S."/>
            <person name="Momiyama H."/>
            <person name="Satoh N."/>
            <person name="Takami S."/>
            <person name="Terashima Y."/>
            <person name="Suzuki O."/>
            <person name="Nakagawa S."/>
            <person name="Senoh A."/>
            <person name="Mizoguchi H."/>
            <person name="Goto Y."/>
            <person name="Shimizu F."/>
            <person name="Wakebe H."/>
            <person name="Hishigaki H."/>
            <person name="Watanabe T."/>
            <person name="Sugiyama A."/>
            <person name="Takemoto M."/>
            <person name="Kawakami B."/>
            <person name="Yamazaki M."/>
            <person name="Watanabe K."/>
            <person name="Kumagai A."/>
            <person name="Itakura S."/>
            <person name="Fukuzumi Y."/>
            <person name="Fujimori Y."/>
            <person name="Komiyama M."/>
            <person name="Tashiro H."/>
            <person name="Tanigami A."/>
            <person name="Fujiwara T."/>
            <person name="Ono T."/>
            <person name="Yamada K."/>
            <person name="Fujii Y."/>
            <person name="Ozaki K."/>
            <person name="Hirao M."/>
            <person name="Ohmori Y."/>
            <person name="Kawabata A."/>
            <person name="Hikiji T."/>
            <person name="Kobatake N."/>
            <person name="Inagaki H."/>
            <person name="Ikema Y."/>
            <person name="Okamoto S."/>
            <person name="Okitani R."/>
            <person name="Kawakami T."/>
            <person name="Noguchi S."/>
            <person name="Itoh T."/>
            <person name="Shigeta K."/>
            <person name="Senba T."/>
            <person name="Matsumura K."/>
            <person name="Nakajima Y."/>
            <person name="Mizuno T."/>
            <person name="Morinaga M."/>
            <person name="Sasaki M."/>
            <person name="Togashi T."/>
            <person name="Oyama M."/>
            <person name="Hata H."/>
            <person name="Watanabe M."/>
            <person name="Komatsu T."/>
            <person name="Mizushima-Sugano J."/>
            <person name="Satoh T."/>
            <person name="Shirai Y."/>
            <person name="Takahashi Y."/>
            <person name="Nakagawa K."/>
            <person name="Okumura K."/>
            <person name="Nagase T."/>
            <person name="Nomura N."/>
            <person name="Kikuchi H."/>
            <person name="Masuho Y."/>
            <person name="Yamashita R."/>
            <person name="Nakai K."/>
            <person name="Yada T."/>
            <person name="Nakamura Y."/>
            <person name="Ohara O."/>
            <person name="Isogai T."/>
            <person name="Sugano S."/>
        </authorList>
    </citation>
    <scope>NUCLEOTIDE SEQUENCE [LARGE SCALE MRNA] (ISOFORM 3)</scope>
    <source>
        <tissue>Spleen</tissue>
    </source>
</reference>
<reference key="4">
    <citation type="journal article" date="2007" name="BMC Genomics">
        <title>The full-ORF clone resource of the German cDNA consortium.</title>
        <authorList>
            <person name="Bechtel S."/>
            <person name="Rosenfelder H."/>
            <person name="Duda A."/>
            <person name="Schmidt C.P."/>
            <person name="Ernst U."/>
            <person name="Wellenreuther R."/>
            <person name="Mehrle A."/>
            <person name="Schuster C."/>
            <person name="Bahr A."/>
            <person name="Bloecker H."/>
            <person name="Heubner D."/>
            <person name="Hoerlein A."/>
            <person name="Michel G."/>
            <person name="Wedler H."/>
            <person name="Koehrer K."/>
            <person name="Ottenwaelder B."/>
            <person name="Poustka A."/>
            <person name="Wiemann S."/>
            <person name="Schupp I."/>
        </authorList>
    </citation>
    <scope>NUCLEOTIDE SEQUENCE [LARGE SCALE MRNA] (ISOFORM 2)</scope>
    <source>
        <tissue>Colon endothelium</tissue>
    </source>
</reference>
<reference key="5">
    <citation type="journal article" date="2004" name="Genome Res.">
        <title>The status, quality, and expansion of the NIH full-length cDNA project: the Mammalian Gene Collection (MGC).</title>
        <authorList>
            <consortium name="The MGC Project Team"/>
        </authorList>
    </citation>
    <scope>NUCLEOTIDE SEQUENCE [LARGE SCALE MRNA] (ISOFORMS 4 AND 5)</scope>
    <source>
        <tissue>Colon</tissue>
        <tissue>Pancreas</tissue>
    </source>
</reference>
<reference key="6">
    <citation type="journal article" date="2009" name="BMC Biochem.">
        <title>A novel human NatA Nalpha-terminal acetyltransferase complex: hNaa16p-hNaa10p (hNat2-hArd1).</title>
        <authorList>
            <person name="Arnesen T."/>
            <person name="Gromyko D."/>
            <person name="Kagabo D."/>
            <person name="Betts M.J."/>
            <person name="Starheim K.K."/>
            <person name="Varhaug J.E."/>
            <person name="Anderson D."/>
            <person name="Lillehaug J.R."/>
        </authorList>
    </citation>
    <scope>INTERACTION WITH NAA10</scope>
</reference>
<reference key="7">
    <citation type="journal article" date="2009" name="BMC Proc.">
        <title>A synopsis of eukaryotic Nalpha-terminal acetyltransferases: nomenclature, subunits and substrates.</title>
        <authorList>
            <person name="Polevoda B."/>
            <person name="Arnesen T."/>
            <person name="Sherman F."/>
        </authorList>
    </citation>
    <scope>NOMENCLATURE</scope>
</reference>
<reference key="8">
    <citation type="journal article" date="2011" name="BMC Syst. Biol.">
        <title>Initial characterization of the human central proteome.</title>
        <authorList>
            <person name="Burkard T.R."/>
            <person name="Planyavsky M."/>
            <person name="Kaupe I."/>
            <person name="Breitwieser F.P."/>
            <person name="Buerckstuemmer T."/>
            <person name="Bennett K.L."/>
            <person name="Superti-Furga G."/>
            <person name="Colinge J."/>
        </authorList>
    </citation>
    <scope>IDENTIFICATION BY MASS SPECTROMETRY [LARGE SCALE ANALYSIS]</scope>
</reference>
<protein>
    <recommendedName>
        <fullName>N-alpha-acetyltransferase 16, NatA auxiliary subunit</fullName>
    </recommendedName>
    <alternativeName>
        <fullName>NMDA receptor-regulated 1-like protein</fullName>
        <shortName>NARG1-like protein</shortName>
    </alternativeName>
</protein>
<gene>
    <name type="primary">NAA16</name>
    <name type="synonym">NARG1L</name>
    <name type="synonym">NAT2</name>
</gene>
<feature type="chain" id="PRO_0000106297" description="N-alpha-acetyltransferase 16, NatA auxiliary subunit">
    <location>
        <begin position="1"/>
        <end position="864"/>
    </location>
</feature>
<feature type="repeat" description="TPR 1">
    <location>
        <begin position="46"/>
        <end position="79"/>
    </location>
</feature>
<feature type="repeat" description="TPR 2">
    <location>
        <begin position="80"/>
        <end position="113"/>
    </location>
</feature>
<feature type="repeat" description="TPR 3">
    <location>
        <begin position="148"/>
        <end position="184"/>
    </location>
</feature>
<feature type="repeat" description="TPR 4">
    <location>
        <begin position="224"/>
        <end position="257"/>
    </location>
</feature>
<feature type="repeat" description="TPR 5">
    <location>
        <begin position="374"/>
        <end position="407"/>
    </location>
</feature>
<feature type="repeat" description="TPR 6">
    <location>
        <begin position="409"/>
        <end position="441"/>
    </location>
</feature>
<feature type="repeat" description="TPR 7">
    <location>
        <begin position="485"/>
        <end position="518"/>
    </location>
</feature>
<feature type="region of interest" description="Disordered" evidence="1">
    <location>
        <begin position="603"/>
        <end position="638"/>
    </location>
</feature>
<feature type="compositionally biased region" description="Basic and acidic residues" evidence="1">
    <location>
        <begin position="606"/>
        <end position="621"/>
    </location>
</feature>
<feature type="splice variant" id="VSP_012562" description="In isoform 5." evidence="3">
    <original>ERFRELMD</original>
    <variation>FYNPGTCY</variation>
    <location>
        <begin position="304"/>
        <end position="311"/>
    </location>
</feature>
<feature type="splice variant" id="VSP_012563" description="In isoform 5." evidence="3">
    <location>
        <begin position="312"/>
        <end position="864"/>
    </location>
</feature>
<feature type="splice variant" id="VSP_012564" description="In isoform 4." evidence="3">
    <original>HIGNLKEAAK</original>
    <variation>VKSESCFLSS</variation>
    <location>
        <begin position="420"/>
        <end position="429"/>
    </location>
</feature>
<feature type="splice variant" id="VSP_012565" description="In isoform 4." evidence="3">
    <location>
        <begin position="430"/>
        <end position="864"/>
    </location>
</feature>
<feature type="splice variant" id="VSP_012566" description="In isoform 3." evidence="2">
    <original>HFF</original>
    <variation>VSC</variation>
    <location>
        <begin position="514"/>
        <end position="516"/>
    </location>
</feature>
<feature type="splice variant" id="VSP_012568" description="In isoform 2." evidence="4">
    <original>FFEITDDQFDFHTYCM</original>
    <variation>SPSTWTTGGKEPQMHP</variation>
    <location>
        <begin position="515"/>
        <end position="530"/>
    </location>
</feature>
<feature type="splice variant" id="VSP_012567" description="In isoform 3." evidence="2">
    <location>
        <begin position="517"/>
        <end position="864"/>
    </location>
</feature>
<feature type="splice variant" id="VSP_012569" description="In isoform 2." evidence="4">
    <location>
        <begin position="531"/>
        <end position="864"/>
    </location>
</feature>
<feature type="sequence variant" id="VAR_052618" description="In dbSNP:rs17062054.">
    <original>E</original>
    <variation>G</variation>
    <location>
        <position position="344"/>
    </location>
</feature>
<dbReference type="EMBL" id="AL354696">
    <property type="status" value="NOT_ANNOTATED_CDS"/>
    <property type="molecule type" value="Genomic_DNA"/>
</dbReference>
<dbReference type="EMBL" id="AL590665">
    <property type="status" value="NOT_ANNOTATED_CDS"/>
    <property type="molecule type" value="Genomic_DNA"/>
</dbReference>
<dbReference type="EMBL" id="AL731858">
    <property type="status" value="NOT_ANNOTATED_CDS"/>
    <property type="molecule type" value="Genomic_DNA"/>
</dbReference>
<dbReference type="EMBL" id="AK097224">
    <property type="status" value="NOT_ANNOTATED_CDS"/>
    <property type="molecule type" value="mRNA"/>
</dbReference>
<dbReference type="EMBL" id="BX640665">
    <property type="protein sequence ID" value="CAE45801.1"/>
    <property type="molecule type" value="mRNA"/>
</dbReference>
<dbReference type="EMBL" id="CH471075">
    <property type="protein sequence ID" value="EAX08654.1"/>
    <property type="molecule type" value="Genomic_DNA"/>
</dbReference>
<dbReference type="EMBL" id="BC032318">
    <property type="protein sequence ID" value="AAH32318.1"/>
    <property type="molecule type" value="mRNA"/>
</dbReference>
<dbReference type="EMBL" id="BC064592">
    <property type="protein sequence ID" value="AAH64592.1"/>
    <property type="molecule type" value="mRNA"/>
</dbReference>
<dbReference type="CCDS" id="CCDS45044.1">
    <molecule id="Q6N069-4"/>
</dbReference>
<dbReference type="CCDS" id="CCDS9379.1">
    <molecule id="Q6N069-1"/>
</dbReference>
<dbReference type="RefSeq" id="NP_001104268.1">
    <molecule id="Q6N069-4"/>
    <property type="nucleotide sequence ID" value="NM_001110798.2"/>
</dbReference>
<dbReference type="RefSeq" id="NP_060997.2">
    <molecule id="Q6N069-5"/>
    <property type="nucleotide sequence ID" value="NM_018527.3"/>
</dbReference>
<dbReference type="RefSeq" id="NP_078837.3">
    <molecule id="Q6N069-1"/>
    <property type="nucleotide sequence ID" value="NM_024561.4"/>
</dbReference>
<dbReference type="RefSeq" id="XP_011533530.1">
    <molecule id="Q6N069-2"/>
    <property type="nucleotide sequence ID" value="XM_011535228.3"/>
</dbReference>
<dbReference type="RefSeq" id="XP_054230938.1">
    <molecule id="Q6N069-2"/>
    <property type="nucleotide sequence ID" value="XM_054374963.1"/>
</dbReference>
<dbReference type="SMR" id="Q6N069"/>
<dbReference type="BioGRID" id="122746">
    <property type="interactions" value="35"/>
</dbReference>
<dbReference type="ComplexPortal" id="CPX-6272">
    <property type="entry name" value="NatA N-alpha-acetyltransferase complex, NAA10-NAA16 variant"/>
</dbReference>
<dbReference type="ComplexPortal" id="CPX-6274">
    <property type="entry name" value="NatA N-alpha-acetyltransferase complex, NAA11-NAA16 variant"/>
</dbReference>
<dbReference type="CORUM" id="Q6N069"/>
<dbReference type="FunCoup" id="Q6N069">
    <property type="interactions" value="2997"/>
</dbReference>
<dbReference type="IntAct" id="Q6N069">
    <property type="interactions" value="19"/>
</dbReference>
<dbReference type="MINT" id="Q6N069"/>
<dbReference type="STRING" id="9606.ENSP00000368716"/>
<dbReference type="ChEMBL" id="CHEMBL3430873"/>
<dbReference type="GlyGen" id="Q6N069">
    <property type="glycosylation" value="1 site, 1 O-linked glycan (1 site)"/>
</dbReference>
<dbReference type="iPTMnet" id="Q6N069"/>
<dbReference type="MetOSite" id="Q6N069"/>
<dbReference type="PhosphoSitePlus" id="Q6N069"/>
<dbReference type="BioMuta" id="NAA16"/>
<dbReference type="DMDM" id="57012940"/>
<dbReference type="jPOST" id="Q6N069"/>
<dbReference type="MassIVE" id="Q6N069"/>
<dbReference type="PaxDb" id="9606-ENSP00000368716"/>
<dbReference type="PeptideAtlas" id="Q6N069"/>
<dbReference type="ProteomicsDB" id="66613">
    <molecule id="Q6N069-1"/>
</dbReference>
<dbReference type="ProteomicsDB" id="66614">
    <molecule id="Q6N069-2"/>
</dbReference>
<dbReference type="ProteomicsDB" id="66615">
    <molecule id="Q6N069-3"/>
</dbReference>
<dbReference type="ProteomicsDB" id="66616">
    <molecule id="Q6N069-4"/>
</dbReference>
<dbReference type="ProteomicsDB" id="66617">
    <molecule id="Q6N069-5"/>
</dbReference>
<dbReference type="Pumba" id="Q6N069"/>
<dbReference type="Antibodypedia" id="23410">
    <property type="antibodies" value="60 antibodies from 19 providers"/>
</dbReference>
<dbReference type="DNASU" id="79612"/>
<dbReference type="Ensembl" id="ENST00000379406.8">
    <molecule id="Q6N069-1"/>
    <property type="protein sequence ID" value="ENSP00000368716.3"/>
    <property type="gene ID" value="ENSG00000172766.19"/>
</dbReference>
<dbReference type="Ensembl" id="ENST00000403412.7">
    <molecule id="Q6N069-4"/>
    <property type="protein sequence ID" value="ENSP00000386103.3"/>
    <property type="gene ID" value="ENSG00000172766.19"/>
</dbReference>
<dbReference type="Ensembl" id="ENST00000464857.5">
    <molecule id="Q6N069-3"/>
    <property type="protein sequence ID" value="ENSP00000432364.1"/>
    <property type="gene ID" value="ENSG00000172766.19"/>
</dbReference>
<dbReference type="GeneID" id="79612"/>
<dbReference type="KEGG" id="hsa:79612"/>
<dbReference type="MANE-Select" id="ENST00000379406.8">
    <property type="protein sequence ID" value="ENSP00000368716.3"/>
    <property type="RefSeq nucleotide sequence ID" value="NM_024561.5"/>
    <property type="RefSeq protein sequence ID" value="NP_078837.3"/>
</dbReference>
<dbReference type="UCSC" id="uc001uye.5">
    <molecule id="Q6N069-1"/>
    <property type="organism name" value="human"/>
</dbReference>
<dbReference type="AGR" id="HGNC:26164"/>
<dbReference type="CTD" id="79612"/>
<dbReference type="DisGeNET" id="79612"/>
<dbReference type="GeneCards" id="NAA16"/>
<dbReference type="HGNC" id="HGNC:26164">
    <property type="gene designation" value="NAA16"/>
</dbReference>
<dbReference type="HPA" id="ENSG00000172766">
    <property type="expression patterns" value="Tissue enhanced (bone marrow, pancreas)"/>
</dbReference>
<dbReference type="MIM" id="619497">
    <property type="type" value="gene"/>
</dbReference>
<dbReference type="neXtProt" id="NX_Q6N069"/>
<dbReference type="OpenTargets" id="ENSG00000172766"/>
<dbReference type="PharmGKB" id="PA165505266"/>
<dbReference type="VEuPathDB" id="HostDB:ENSG00000172766"/>
<dbReference type="eggNOG" id="KOG1156">
    <property type="taxonomic scope" value="Eukaryota"/>
</dbReference>
<dbReference type="GeneTree" id="ENSGT00950000183174"/>
<dbReference type="HOGENOM" id="CLU_006686_0_0_1"/>
<dbReference type="InParanoid" id="Q6N069"/>
<dbReference type="OMA" id="HTAINYD"/>
<dbReference type="OrthoDB" id="10263032at2759"/>
<dbReference type="PAN-GO" id="Q6N069">
    <property type="GO annotations" value="4 GO annotations based on evolutionary models"/>
</dbReference>
<dbReference type="PhylomeDB" id="Q6N069"/>
<dbReference type="TreeFam" id="TF106301"/>
<dbReference type="PathwayCommons" id="Q6N069"/>
<dbReference type="SignaLink" id="Q6N069"/>
<dbReference type="BioGRID-ORCS" id="79612">
    <property type="hits" value="25 hits in 1153 CRISPR screens"/>
</dbReference>
<dbReference type="ChiTaRS" id="NAA16">
    <property type="organism name" value="human"/>
</dbReference>
<dbReference type="GenomeRNAi" id="79612"/>
<dbReference type="Pharos" id="Q6N069">
    <property type="development level" value="Tbio"/>
</dbReference>
<dbReference type="PRO" id="PR:Q6N069"/>
<dbReference type="Proteomes" id="UP000005640">
    <property type="component" value="Chromosome 13"/>
</dbReference>
<dbReference type="RNAct" id="Q6N069">
    <property type="molecule type" value="protein"/>
</dbReference>
<dbReference type="Bgee" id="ENSG00000172766">
    <property type="expression patterns" value="Expressed in body of pancreas and 203 other cell types or tissues"/>
</dbReference>
<dbReference type="ExpressionAtlas" id="Q6N069">
    <property type="expression patterns" value="baseline and differential"/>
</dbReference>
<dbReference type="GO" id="GO:0005737">
    <property type="term" value="C:cytoplasm"/>
    <property type="evidence" value="ECO:0000314"/>
    <property type="project" value="UniProtKB"/>
</dbReference>
<dbReference type="GO" id="GO:0005829">
    <property type="term" value="C:cytosol"/>
    <property type="evidence" value="ECO:0000314"/>
    <property type="project" value="HPA"/>
</dbReference>
<dbReference type="GO" id="GO:0070062">
    <property type="term" value="C:extracellular exosome"/>
    <property type="evidence" value="ECO:0007005"/>
    <property type="project" value="UniProtKB"/>
</dbReference>
<dbReference type="GO" id="GO:0031415">
    <property type="term" value="C:NatA complex"/>
    <property type="evidence" value="ECO:0000314"/>
    <property type="project" value="UniProtKB"/>
</dbReference>
<dbReference type="GO" id="GO:0005634">
    <property type="term" value="C:nucleus"/>
    <property type="evidence" value="ECO:0000250"/>
    <property type="project" value="UniProtKB"/>
</dbReference>
<dbReference type="GO" id="GO:0005667">
    <property type="term" value="C:transcription regulator complex"/>
    <property type="evidence" value="ECO:0000250"/>
    <property type="project" value="UniProtKB"/>
</dbReference>
<dbReference type="GO" id="GO:0010698">
    <property type="term" value="F:acetyltransferase activator activity"/>
    <property type="evidence" value="ECO:0000318"/>
    <property type="project" value="GO_Central"/>
</dbReference>
<dbReference type="GO" id="GO:0043022">
    <property type="term" value="F:ribosome binding"/>
    <property type="evidence" value="ECO:0000314"/>
    <property type="project" value="UniProtKB"/>
</dbReference>
<dbReference type="GO" id="GO:0006474">
    <property type="term" value="P:N-terminal protein amino acid acetylation"/>
    <property type="evidence" value="ECO:0000314"/>
    <property type="project" value="UniProtKB"/>
</dbReference>
<dbReference type="GO" id="GO:0043066">
    <property type="term" value="P:negative regulation of apoptotic process"/>
    <property type="evidence" value="ECO:0000315"/>
    <property type="project" value="UniProtKB"/>
</dbReference>
<dbReference type="GO" id="GO:0045893">
    <property type="term" value="P:positive regulation of DNA-templated transcription"/>
    <property type="evidence" value="ECO:0000250"/>
    <property type="project" value="UniProtKB"/>
</dbReference>
<dbReference type="GO" id="GO:0050821">
    <property type="term" value="P:protein stabilization"/>
    <property type="evidence" value="ECO:0000315"/>
    <property type="project" value="UniProtKB"/>
</dbReference>
<dbReference type="FunFam" id="1.25.40.1010:FF:000001">
    <property type="entry name" value="N-alpha-acetyltransferase 15, NatA auxiliary subunit"/>
    <property type="match status" value="1"/>
</dbReference>
<dbReference type="FunFam" id="1.25.40.1040:FF:000001">
    <property type="entry name" value="N-alpha-acetyltransferase 15, NatA auxiliary subunit"/>
    <property type="match status" value="1"/>
</dbReference>
<dbReference type="Gene3D" id="1.25.40.1010">
    <property type="match status" value="1"/>
</dbReference>
<dbReference type="Gene3D" id="1.25.40.1040">
    <property type="match status" value="1"/>
</dbReference>
<dbReference type="InterPro" id="IPR021183">
    <property type="entry name" value="NatA_aux_su"/>
</dbReference>
<dbReference type="InterPro" id="IPR011990">
    <property type="entry name" value="TPR-like_helical_dom_sf"/>
</dbReference>
<dbReference type="InterPro" id="IPR013105">
    <property type="entry name" value="TPR_2"/>
</dbReference>
<dbReference type="InterPro" id="IPR019734">
    <property type="entry name" value="TPR_rpt"/>
</dbReference>
<dbReference type="PANTHER" id="PTHR22767:SF5">
    <property type="entry name" value="N-ALPHA-ACETYLTRANSFERASE 16, NATA AUXILIARY SUBUNIT"/>
    <property type="match status" value="1"/>
</dbReference>
<dbReference type="PANTHER" id="PTHR22767">
    <property type="entry name" value="N-TERMINAL ACETYLTRANSFERASE-RELATED"/>
    <property type="match status" value="1"/>
</dbReference>
<dbReference type="Pfam" id="PF12569">
    <property type="entry name" value="NatA_aux_su"/>
    <property type="match status" value="1"/>
</dbReference>
<dbReference type="Pfam" id="PF07719">
    <property type="entry name" value="TPR_2"/>
    <property type="match status" value="1"/>
</dbReference>
<dbReference type="PIRSF" id="PIRSF000422">
    <property type="entry name" value="N-terminal-AcTrfase-A_aux_su"/>
    <property type="match status" value="1"/>
</dbReference>
<dbReference type="SMART" id="SM00028">
    <property type="entry name" value="TPR"/>
    <property type="match status" value="6"/>
</dbReference>
<dbReference type="SUPFAM" id="SSF48452">
    <property type="entry name" value="TPR-like"/>
    <property type="match status" value="1"/>
</dbReference>
<dbReference type="PROSITE" id="PS50005">
    <property type="entry name" value="TPR"/>
    <property type="match status" value="5"/>
</dbReference>
<dbReference type="PROSITE" id="PS50293">
    <property type="entry name" value="TPR_REGION"/>
    <property type="match status" value="3"/>
</dbReference>
<evidence type="ECO:0000256" key="1">
    <source>
        <dbReference type="SAM" id="MobiDB-lite"/>
    </source>
</evidence>
<evidence type="ECO:0000303" key="2">
    <source>
    </source>
</evidence>
<evidence type="ECO:0000303" key="3">
    <source>
    </source>
</evidence>
<evidence type="ECO:0000303" key="4">
    <source>
    </source>
</evidence>
<accession>Q6N069</accession>
<accession>B0QZ59</accession>
<accession>Q5VSP9</accession>
<accession>Q6P2D5</accession>
<accession>Q8N5J3</accession>
<accession>Q8N870</accession>
<organism>
    <name type="scientific">Homo sapiens</name>
    <name type="common">Human</name>
    <dbReference type="NCBI Taxonomy" id="9606"/>
    <lineage>
        <taxon>Eukaryota</taxon>
        <taxon>Metazoa</taxon>
        <taxon>Chordata</taxon>
        <taxon>Craniata</taxon>
        <taxon>Vertebrata</taxon>
        <taxon>Euteleostomi</taxon>
        <taxon>Mammalia</taxon>
        <taxon>Eutheria</taxon>
        <taxon>Euarchontoglires</taxon>
        <taxon>Primates</taxon>
        <taxon>Haplorrhini</taxon>
        <taxon>Catarrhini</taxon>
        <taxon>Hominidae</taxon>
        <taxon>Homo</taxon>
    </lineage>
</organism>
<sequence>MPNVLLPPKESNLFKRILKCYEQKQYKNGLKFCKMILSNPKFAEHGETLAMKGLTLNCLGKKEEAYEFVRKGLRNDVKSHVCWHVYGLLQRSDKKYDEAIKCYRNALKLDKDNLQILRDLSLLQIQMRDLEGYRETRYQLLQLRPTQRASWIGYAIAYHLLKDYDMALKLLEEFRQTQQVPPNKIDYEYSELILYQNQVMREADLLQESLEHIEMYEKQICDKLLVEEIKGEILLKLGRLKEASEVFKNLIDRNAENWCYYEGLEKALQISTLEERLQIYEEISKQHPKAITPRRLPLTLVPGERFRELMDKFLRVNFSKGCPPLFTTLKSLYYNTEKVSIIQELVTNYEASLKTCDFFSPYENGEKEPPTTLLWVQYFLAQHFDKLGQYSLALDYINAAIASTPTLIELFYMKAKIYKHIGNLKEAAKWMDEAQSLDTADRFINSKCAKYMLRANMIKEAEEMCSKFTREGTSAMENLNEMQCMWFQTECISAYQRLGRYGDALKKCHEVERHFFEITDDQFDFHTYCMRKMTLRAYVDLLRLEDILRRHAFYFKAARSAIEIYLKLYDNPLTNESKQQEINSENLSAKELKKMLSKQRRAQKKAKLEEERKHAERERQQKNQKKKRDEEEEEASGLKEELIPEKLERVENPLEEAVKFLIPLKNLVADNIDTHLLAFEIYFRKGKFLLMLQSVKRAFAINSNNPWLHECLIRFSKSVSNHSNLPDIVSKVLSQEMQKIFVKKDLESFNEDFLKRNATSLQHLLSGAKMMYFLDKSRQEKAIAIATRLDETIKDKDVKTLIKVSEALLDGSFGNCSSQYEEYRMACHNLLPFTSAFLPAVNEVDNPNVALNHTANYDVLANEI</sequence>
<keyword id="KW-0025">Alternative splicing</keyword>
<keyword id="KW-1267">Proteomics identification</keyword>
<keyword id="KW-1185">Reference proteome</keyword>
<keyword id="KW-0677">Repeat</keyword>
<keyword id="KW-0802">TPR repeat</keyword>
<proteinExistence type="evidence at protein level"/>
<name>NAA16_HUMAN</name>